<proteinExistence type="inferred from homology"/>
<name>RL2_CLOBH</name>
<keyword id="KW-1185">Reference proteome</keyword>
<keyword id="KW-0687">Ribonucleoprotein</keyword>
<keyword id="KW-0689">Ribosomal protein</keyword>
<keyword id="KW-0694">RNA-binding</keyword>
<keyword id="KW-0699">rRNA-binding</keyword>
<reference key="1">
    <citation type="journal article" date="2007" name="Genome Res.">
        <title>Genome sequence of a proteolytic (Group I) Clostridium botulinum strain Hall A and comparative analysis of the clostridial genomes.</title>
        <authorList>
            <person name="Sebaihia M."/>
            <person name="Peck M.W."/>
            <person name="Minton N.P."/>
            <person name="Thomson N.R."/>
            <person name="Holden M.T.G."/>
            <person name="Mitchell W.J."/>
            <person name="Carter A.T."/>
            <person name="Bentley S.D."/>
            <person name="Mason D.R."/>
            <person name="Crossman L."/>
            <person name="Paul C.J."/>
            <person name="Ivens A."/>
            <person name="Wells-Bennik M.H.J."/>
            <person name="Davis I.J."/>
            <person name="Cerdeno-Tarraga A.M."/>
            <person name="Churcher C."/>
            <person name="Quail M.A."/>
            <person name="Chillingworth T."/>
            <person name="Feltwell T."/>
            <person name="Fraser A."/>
            <person name="Goodhead I."/>
            <person name="Hance Z."/>
            <person name="Jagels K."/>
            <person name="Larke N."/>
            <person name="Maddison M."/>
            <person name="Moule S."/>
            <person name="Mungall K."/>
            <person name="Norbertczak H."/>
            <person name="Rabbinowitsch E."/>
            <person name="Sanders M."/>
            <person name="Simmonds M."/>
            <person name="White B."/>
            <person name="Whithead S."/>
            <person name="Parkhill J."/>
        </authorList>
    </citation>
    <scope>NUCLEOTIDE SEQUENCE [LARGE SCALE GENOMIC DNA]</scope>
    <source>
        <strain>Hall / ATCC 3502 / NCTC 13319 / Type A</strain>
    </source>
</reference>
<reference key="2">
    <citation type="journal article" date="2007" name="PLoS ONE">
        <title>Analysis of the neurotoxin complex genes in Clostridium botulinum A1-A4 and B1 strains: BoNT/A3, /Ba4 and /B1 clusters are located within plasmids.</title>
        <authorList>
            <person name="Smith T.J."/>
            <person name="Hill K.K."/>
            <person name="Foley B.T."/>
            <person name="Detter J.C."/>
            <person name="Munk A.C."/>
            <person name="Bruce D.C."/>
            <person name="Doggett N.A."/>
            <person name="Smith L.A."/>
            <person name="Marks J.D."/>
            <person name="Xie G."/>
            <person name="Brettin T.S."/>
        </authorList>
    </citation>
    <scope>NUCLEOTIDE SEQUENCE [LARGE SCALE GENOMIC DNA]</scope>
    <source>
        <strain>Hall / ATCC 3502 / NCTC 13319 / Type A</strain>
    </source>
</reference>
<gene>
    <name evidence="1" type="primary">rplB</name>
    <name type="ordered locus">CBO3477</name>
    <name type="ordered locus">CLC_3422</name>
</gene>
<feature type="chain" id="PRO_0000309899" description="Large ribosomal subunit protein uL2">
    <location>
        <begin position="1"/>
        <end position="277"/>
    </location>
</feature>
<feature type="region of interest" description="Disordered" evidence="2">
    <location>
        <begin position="219"/>
        <end position="277"/>
    </location>
</feature>
<sequence>MAVKGFRPTTPTRREMTMCTFEEITTSTPEKSLLVSLKKSGGRNANGKITVRHIGGGAKRKYRIIDFKRNKDNIPAKVVSIEYDPNRTAFIALVVYADGEKRYIIAPVGLKVGDTVVSGPESDIKVGNCLPIRNIPVGTVIHNIELAAGKGAQLVRSAGNSAQLMAKEGDYSQVRLPSGEVRYIRVECRATIGVVSNQTSEIVNIGKAGRKRHMGVRPTVRGSVMNPNDHPHGGGEGRSPIGHPSPRTPWGKPALGYKTRKNKKYSDRFIVKRRHDK</sequence>
<comment type="function">
    <text evidence="1">One of the primary rRNA binding proteins. Required for association of the 30S and 50S subunits to form the 70S ribosome, for tRNA binding and peptide bond formation. It has been suggested to have peptidyltransferase activity; this is somewhat controversial. Makes several contacts with the 16S rRNA in the 70S ribosome.</text>
</comment>
<comment type="subunit">
    <text evidence="1">Part of the 50S ribosomal subunit. Forms a bridge to the 30S subunit in the 70S ribosome.</text>
</comment>
<comment type="similarity">
    <text evidence="1">Belongs to the universal ribosomal protein uL2 family.</text>
</comment>
<dbReference type="EMBL" id="AM412317">
    <property type="protein sequence ID" value="CAL85038.1"/>
    <property type="molecule type" value="Genomic_DNA"/>
</dbReference>
<dbReference type="EMBL" id="CP000727">
    <property type="protein sequence ID" value="ABS37943.1"/>
    <property type="molecule type" value="Genomic_DNA"/>
</dbReference>
<dbReference type="RefSeq" id="WP_003357299.1">
    <property type="nucleotide sequence ID" value="NC_009698.1"/>
</dbReference>
<dbReference type="RefSeq" id="YP_001255959.1">
    <property type="nucleotide sequence ID" value="NC_009495.1"/>
</dbReference>
<dbReference type="RefSeq" id="YP_001389200.1">
    <property type="nucleotide sequence ID" value="NC_009698.1"/>
</dbReference>
<dbReference type="SMR" id="A5I7K3"/>
<dbReference type="GeneID" id="5187734"/>
<dbReference type="KEGG" id="cbh:CLC_3422"/>
<dbReference type="KEGG" id="cbo:CBO3477"/>
<dbReference type="PATRIC" id="fig|413999.7.peg.3454"/>
<dbReference type="HOGENOM" id="CLU_036235_2_1_9"/>
<dbReference type="PRO" id="PR:A5I7K3"/>
<dbReference type="Proteomes" id="UP000001986">
    <property type="component" value="Chromosome"/>
</dbReference>
<dbReference type="GO" id="GO:0015934">
    <property type="term" value="C:large ribosomal subunit"/>
    <property type="evidence" value="ECO:0007669"/>
    <property type="project" value="InterPro"/>
</dbReference>
<dbReference type="GO" id="GO:0003723">
    <property type="term" value="F:RNA binding"/>
    <property type="evidence" value="ECO:0000318"/>
    <property type="project" value="GO_Central"/>
</dbReference>
<dbReference type="GO" id="GO:0019843">
    <property type="term" value="F:rRNA binding"/>
    <property type="evidence" value="ECO:0007669"/>
    <property type="project" value="UniProtKB-UniRule"/>
</dbReference>
<dbReference type="GO" id="GO:0003735">
    <property type="term" value="F:structural constituent of ribosome"/>
    <property type="evidence" value="ECO:0000318"/>
    <property type="project" value="GO_Central"/>
</dbReference>
<dbReference type="GO" id="GO:0016740">
    <property type="term" value="F:transferase activity"/>
    <property type="evidence" value="ECO:0007669"/>
    <property type="project" value="InterPro"/>
</dbReference>
<dbReference type="GO" id="GO:0002181">
    <property type="term" value="P:cytoplasmic translation"/>
    <property type="evidence" value="ECO:0000318"/>
    <property type="project" value="GO_Central"/>
</dbReference>
<dbReference type="FunFam" id="2.30.30.30:FF:000001">
    <property type="entry name" value="50S ribosomal protein L2"/>
    <property type="match status" value="1"/>
</dbReference>
<dbReference type="FunFam" id="2.40.50.140:FF:000003">
    <property type="entry name" value="50S ribosomal protein L2"/>
    <property type="match status" value="1"/>
</dbReference>
<dbReference type="FunFam" id="4.10.950.10:FF:000001">
    <property type="entry name" value="50S ribosomal protein L2"/>
    <property type="match status" value="1"/>
</dbReference>
<dbReference type="Gene3D" id="2.30.30.30">
    <property type="match status" value="1"/>
</dbReference>
<dbReference type="Gene3D" id="2.40.50.140">
    <property type="entry name" value="Nucleic acid-binding proteins"/>
    <property type="match status" value="1"/>
</dbReference>
<dbReference type="Gene3D" id="4.10.950.10">
    <property type="entry name" value="Ribosomal protein L2, domain 3"/>
    <property type="match status" value="1"/>
</dbReference>
<dbReference type="HAMAP" id="MF_01320_B">
    <property type="entry name" value="Ribosomal_uL2_B"/>
    <property type="match status" value="1"/>
</dbReference>
<dbReference type="InterPro" id="IPR012340">
    <property type="entry name" value="NA-bd_OB-fold"/>
</dbReference>
<dbReference type="InterPro" id="IPR014722">
    <property type="entry name" value="Rib_uL2_dom2"/>
</dbReference>
<dbReference type="InterPro" id="IPR002171">
    <property type="entry name" value="Ribosomal_uL2"/>
</dbReference>
<dbReference type="InterPro" id="IPR005880">
    <property type="entry name" value="Ribosomal_uL2_bac/org-type"/>
</dbReference>
<dbReference type="InterPro" id="IPR022669">
    <property type="entry name" value="Ribosomal_uL2_C"/>
</dbReference>
<dbReference type="InterPro" id="IPR022671">
    <property type="entry name" value="Ribosomal_uL2_CS"/>
</dbReference>
<dbReference type="InterPro" id="IPR014726">
    <property type="entry name" value="Ribosomal_uL2_dom3"/>
</dbReference>
<dbReference type="InterPro" id="IPR022666">
    <property type="entry name" value="Ribosomal_uL2_RNA-bd_dom"/>
</dbReference>
<dbReference type="InterPro" id="IPR008991">
    <property type="entry name" value="Translation_prot_SH3-like_sf"/>
</dbReference>
<dbReference type="NCBIfam" id="TIGR01171">
    <property type="entry name" value="rplB_bact"/>
    <property type="match status" value="1"/>
</dbReference>
<dbReference type="PANTHER" id="PTHR13691:SF5">
    <property type="entry name" value="LARGE RIBOSOMAL SUBUNIT PROTEIN UL2M"/>
    <property type="match status" value="1"/>
</dbReference>
<dbReference type="PANTHER" id="PTHR13691">
    <property type="entry name" value="RIBOSOMAL PROTEIN L2"/>
    <property type="match status" value="1"/>
</dbReference>
<dbReference type="Pfam" id="PF00181">
    <property type="entry name" value="Ribosomal_L2"/>
    <property type="match status" value="1"/>
</dbReference>
<dbReference type="Pfam" id="PF03947">
    <property type="entry name" value="Ribosomal_L2_C"/>
    <property type="match status" value="1"/>
</dbReference>
<dbReference type="PIRSF" id="PIRSF002158">
    <property type="entry name" value="Ribosomal_L2"/>
    <property type="match status" value="1"/>
</dbReference>
<dbReference type="SMART" id="SM01383">
    <property type="entry name" value="Ribosomal_L2"/>
    <property type="match status" value="1"/>
</dbReference>
<dbReference type="SMART" id="SM01382">
    <property type="entry name" value="Ribosomal_L2_C"/>
    <property type="match status" value="1"/>
</dbReference>
<dbReference type="SUPFAM" id="SSF50249">
    <property type="entry name" value="Nucleic acid-binding proteins"/>
    <property type="match status" value="1"/>
</dbReference>
<dbReference type="SUPFAM" id="SSF50104">
    <property type="entry name" value="Translation proteins SH3-like domain"/>
    <property type="match status" value="1"/>
</dbReference>
<dbReference type="PROSITE" id="PS00467">
    <property type="entry name" value="RIBOSOMAL_L2"/>
    <property type="match status" value="1"/>
</dbReference>
<evidence type="ECO:0000255" key="1">
    <source>
        <dbReference type="HAMAP-Rule" id="MF_01320"/>
    </source>
</evidence>
<evidence type="ECO:0000256" key="2">
    <source>
        <dbReference type="SAM" id="MobiDB-lite"/>
    </source>
</evidence>
<evidence type="ECO:0000305" key="3"/>
<organism>
    <name type="scientific">Clostridium botulinum (strain Hall / ATCC 3502 / NCTC 13319 / Type A)</name>
    <dbReference type="NCBI Taxonomy" id="441771"/>
    <lineage>
        <taxon>Bacteria</taxon>
        <taxon>Bacillati</taxon>
        <taxon>Bacillota</taxon>
        <taxon>Clostridia</taxon>
        <taxon>Eubacteriales</taxon>
        <taxon>Clostridiaceae</taxon>
        <taxon>Clostridium</taxon>
    </lineage>
</organism>
<protein>
    <recommendedName>
        <fullName evidence="1">Large ribosomal subunit protein uL2</fullName>
    </recommendedName>
    <alternativeName>
        <fullName evidence="3">50S ribosomal protein L2</fullName>
    </alternativeName>
</protein>
<accession>A5I7K3</accession>
<accession>A7G8T5</accession>